<keyword id="KW-0997">Cell inner membrane</keyword>
<keyword id="KW-1003">Cell membrane</keyword>
<keyword id="KW-0472">Membrane</keyword>
<keyword id="KW-0812">Transmembrane</keyword>
<keyword id="KW-1133">Transmembrane helix</keyword>
<keyword id="KW-0813">Transport</keyword>
<accession>B5Y298</accession>
<protein>
    <recommendedName>
        <fullName evidence="1">Probable succinate transporter subunit YjjB</fullName>
    </recommendedName>
</protein>
<organism>
    <name type="scientific">Klebsiella pneumoniae (strain 342)</name>
    <dbReference type="NCBI Taxonomy" id="507522"/>
    <lineage>
        <taxon>Bacteria</taxon>
        <taxon>Pseudomonadati</taxon>
        <taxon>Pseudomonadota</taxon>
        <taxon>Gammaproteobacteria</taxon>
        <taxon>Enterobacterales</taxon>
        <taxon>Enterobacteriaceae</taxon>
        <taxon>Klebsiella/Raoultella group</taxon>
        <taxon>Klebsiella</taxon>
        <taxon>Klebsiella pneumoniae complex</taxon>
    </lineage>
</organism>
<reference key="1">
    <citation type="journal article" date="2008" name="PLoS Genet.">
        <title>Complete genome sequence of the N2-fixing broad host range endophyte Klebsiella pneumoniae 342 and virulence predictions verified in mice.</title>
        <authorList>
            <person name="Fouts D.E."/>
            <person name="Tyler H.L."/>
            <person name="DeBoy R.T."/>
            <person name="Daugherty S."/>
            <person name="Ren Q."/>
            <person name="Badger J.H."/>
            <person name="Durkin A.S."/>
            <person name="Huot H."/>
            <person name="Shrivastava S."/>
            <person name="Kothari S."/>
            <person name="Dodson R.J."/>
            <person name="Mohamoud Y."/>
            <person name="Khouri H."/>
            <person name="Roesch L.F.W."/>
            <person name="Krogfelt K.A."/>
            <person name="Struve C."/>
            <person name="Triplett E.W."/>
            <person name="Methe B.A."/>
        </authorList>
    </citation>
    <scope>NUCLEOTIDE SEQUENCE [LARGE SCALE GENOMIC DNA]</scope>
    <source>
        <strain>342</strain>
    </source>
</reference>
<name>YJJB_KLEP3</name>
<gene>
    <name evidence="1" type="primary">yjjB</name>
    <name type="ordered locus">KPK_4801</name>
</gene>
<dbReference type="EMBL" id="CP000964">
    <property type="protein sequence ID" value="ACI09118.1"/>
    <property type="molecule type" value="Genomic_DNA"/>
</dbReference>
<dbReference type="KEGG" id="kpe:KPK_4801"/>
<dbReference type="HOGENOM" id="CLU_117642_1_0_6"/>
<dbReference type="BioCyc" id="KPNE507522:GI0B-4782-MONOMER"/>
<dbReference type="Proteomes" id="UP000001734">
    <property type="component" value="Chromosome"/>
</dbReference>
<dbReference type="GO" id="GO:0005886">
    <property type="term" value="C:plasma membrane"/>
    <property type="evidence" value="ECO:0007669"/>
    <property type="project" value="UniProtKB-SubCell"/>
</dbReference>
<dbReference type="GO" id="GO:0015744">
    <property type="term" value="P:succinate transport"/>
    <property type="evidence" value="ECO:0007669"/>
    <property type="project" value="UniProtKB-UniRule"/>
</dbReference>
<dbReference type="HAMAP" id="MF_01191">
    <property type="entry name" value="YjjB"/>
    <property type="match status" value="1"/>
</dbReference>
<dbReference type="InterPro" id="IPR024528">
    <property type="entry name" value="ThrE_2"/>
</dbReference>
<dbReference type="InterPro" id="IPR050539">
    <property type="entry name" value="ThrE_Dicarb/AminoAcid_Exp"/>
</dbReference>
<dbReference type="InterPro" id="IPR020914">
    <property type="entry name" value="YjjB"/>
</dbReference>
<dbReference type="NCBIfam" id="NF007391">
    <property type="entry name" value="PRK09917.1"/>
    <property type="match status" value="1"/>
</dbReference>
<dbReference type="PANTHER" id="PTHR34390:SF1">
    <property type="entry name" value="SUCCINATE TRANSPORTER SUBUNIT YJJB-RELATED"/>
    <property type="match status" value="1"/>
</dbReference>
<dbReference type="PANTHER" id="PTHR34390">
    <property type="entry name" value="UPF0442 PROTEIN YJJB-RELATED"/>
    <property type="match status" value="1"/>
</dbReference>
<dbReference type="Pfam" id="PF12821">
    <property type="entry name" value="ThrE_2"/>
    <property type="match status" value="1"/>
</dbReference>
<proteinExistence type="inferred from homology"/>
<feature type="chain" id="PRO_1000138367" description="Probable succinate transporter subunit YjjB">
    <location>
        <begin position="1"/>
        <end position="157"/>
    </location>
</feature>
<feature type="transmembrane region" description="Helical" evidence="1">
    <location>
        <begin position="2"/>
        <end position="22"/>
    </location>
</feature>
<feature type="transmembrane region" description="Helical" evidence="1">
    <location>
        <begin position="55"/>
        <end position="75"/>
    </location>
</feature>
<feature type="transmembrane region" description="Helical" evidence="1">
    <location>
        <begin position="87"/>
        <end position="107"/>
    </location>
</feature>
<feature type="transmembrane region" description="Helical" evidence="1">
    <location>
        <begin position="129"/>
        <end position="149"/>
    </location>
</feature>
<sequence>MGIISFIFALAEDMLLAAIPAVGFAMVFNVPQRALRWCALLGAIGHGSRMVMMSAGFNIEWATFLAALLVGSIGIQWSRWYLAHPKIFTVAAVIPMFPGISAYTAMISAVKISHFGYSEEMMILLLSNFLKASSIVGALSIGLSIPGLWLYRKRPRV</sequence>
<evidence type="ECO:0000255" key="1">
    <source>
        <dbReference type="HAMAP-Rule" id="MF_01191"/>
    </source>
</evidence>
<comment type="function">
    <text evidence="1">Involved in succinate export with YjjP. Both proteins are required for export.</text>
</comment>
<comment type="subunit">
    <text evidence="1">The transporter is composed of YjjB and YjjP.</text>
</comment>
<comment type="subcellular location">
    <subcellularLocation>
        <location evidence="1">Cell inner membrane</location>
        <topology evidence="1">Multi-pass membrane protein</topology>
    </subcellularLocation>
</comment>
<comment type="similarity">
    <text evidence="1">Belongs to the ThrE exporter (TC 2.A.79) family.</text>
</comment>